<protein>
    <recommendedName>
        <fullName>COMM domain-containing protein 6</fullName>
    </recommendedName>
</protein>
<name>COMD6_DICDI</name>
<proteinExistence type="inferred from homology"/>
<dbReference type="EMBL" id="AAFI02000085">
    <property type="protein sequence ID" value="EAL64417.2"/>
    <property type="molecule type" value="Genomic_DNA"/>
</dbReference>
<dbReference type="RefSeq" id="XP_637929.2">
    <property type="nucleotide sequence ID" value="XM_632837.2"/>
</dbReference>
<dbReference type="SMR" id="Q54MA5"/>
<dbReference type="FunCoup" id="Q54MA5">
    <property type="interactions" value="2"/>
</dbReference>
<dbReference type="STRING" id="44689.Q54MA5"/>
<dbReference type="PaxDb" id="44689-DDB0266457"/>
<dbReference type="EnsemblProtists" id="EAL64417">
    <property type="protein sequence ID" value="EAL64417"/>
    <property type="gene ID" value="DDB_G0286077"/>
</dbReference>
<dbReference type="GeneID" id="8625440"/>
<dbReference type="KEGG" id="ddi:DDB_G0286077"/>
<dbReference type="dictyBase" id="DDB_G0286077">
    <property type="gene designation" value="commd6"/>
</dbReference>
<dbReference type="VEuPathDB" id="AmoebaDB:DDB_G0286077"/>
<dbReference type="eggNOG" id="ENOG502S0MA">
    <property type="taxonomic scope" value="Eukaryota"/>
</dbReference>
<dbReference type="HOGENOM" id="CLU_139245_1_0_1"/>
<dbReference type="InParanoid" id="Q54MA5"/>
<dbReference type="OMA" id="KLVDFQW"/>
<dbReference type="PhylomeDB" id="Q54MA5"/>
<dbReference type="Reactome" id="R-DDI-8951664">
    <property type="pathway name" value="Neddylation"/>
</dbReference>
<dbReference type="PRO" id="PR:Q54MA5"/>
<dbReference type="Proteomes" id="UP000002195">
    <property type="component" value="Chromosome 4"/>
</dbReference>
<dbReference type="GO" id="GO:0051059">
    <property type="term" value="F:NF-kappaB binding"/>
    <property type="evidence" value="ECO:0000318"/>
    <property type="project" value="GO_Central"/>
</dbReference>
<dbReference type="GO" id="GO:0007165">
    <property type="term" value="P:signal transduction"/>
    <property type="evidence" value="ECO:0000318"/>
    <property type="project" value="GO_Central"/>
</dbReference>
<dbReference type="InterPro" id="IPR017920">
    <property type="entry name" value="COMM"/>
</dbReference>
<dbReference type="InterPro" id="IPR047155">
    <property type="entry name" value="COMMD4/6/7/8"/>
</dbReference>
<dbReference type="PANTHER" id="PTHR16231">
    <property type="entry name" value="COMM DOMAIN-CONTAINING PROTEIN 4-8 FAMILY MEMBER"/>
    <property type="match status" value="1"/>
</dbReference>
<dbReference type="PANTHER" id="PTHR16231:SF5">
    <property type="entry name" value="COMM DOMAIN-CONTAINING PROTEIN 6"/>
    <property type="match status" value="1"/>
</dbReference>
<dbReference type="Pfam" id="PF07258">
    <property type="entry name" value="COMM_domain"/>
    <property type="match status" value="1"/>
</dbReference>
<dbReference type="PROSITE" id="PS51269">
    <property type="entry name" value="COMM"/>
    <property type="match status" value="1"/>
</dbReference>
<evidence type="ECO:0000250" key="1">
    <source>
        <dbReference type="UniProtKB" id="Q7Z4G1"/>
    </source>
</evidence>
<evidence type="ECO:0000255" key="2">
    <source>
        <dbReference type="PROSITE-ProRule" id="PRU00602"/>
    </source>
</evidence>
<evidence type="ECO:0000305" key="3"/>
<feature type="chain" id="PRO_0000327724" description="COMM domain-containing protein 6">
    <location>
        <begin position="1"/>
        <end position="76"/>
    </location>
</feature>
<feature type="domain" description="COMM" evidence="2">
    <location>
        <begin position="9"/>
        <end position="76"/>
    </location>
</feature>
<sequence>MDKVFNVGKLVDFQWKLGVSIASNHSSQLNTPFITVFVKVLDSNSEVTSHSFELTIPEFKNFAQQFKDMSNMIETL</sequence>
<keyword id="KW-1185">Reference proteome</keyword>
<organism>
    <name type="scientific">Dictyostelium discoideum</name>
    <name type="common">Social amoeba</name>
    <dbReference type="NCBI Taxonomy" id="44689"/>
    <lineage>
        <taxon>Eukaryota</taxon>
        <taxon>Amoebozoa</taxon>
        <taxon>Evosea</taxon>
        <taxon>Eumycetozoa</taxon>
        <taxon>Dictyostelia</taxon>
        <taxon>Dictyosteliales</taxon>
        <taxon>Dictyosteliaceae</taxon>
        <taxon>Dictyostelium</taxon>
    </lineage>
</organism>
<accession>Q54MA5</accession>
<reference key="1">
    <citation type="journal article" date="2005" name="Nature">
        <title>The genome of the social amoeba Dictyostelium discoideum.</title>
        <authorList>
            <person name="Eichinger L."/>
            <person name="Pachebat J.A."/>
            <person name="Gloeckner G."/>
            <person name="Rajandream M.A."/>
            <person name="Sucgang R."/>
            <person name="Berriman M."/>
            <person name="Song J."/>
            <person name="Olsen R."/>
            <person name="Szafranski K."/>
            <person name="Xu Q."/>
            <person name="Tunggal B."/>
            <person name="Kummerfeld S."/>
            <person name="Madera M."/>
            <person name="Konfortov B.A."/>
            <person name="Rivero F."/>
            <person name="Bankier A.T."/>
            <person name="Lehmann R."/>
            <person name="Hamlin N."/>
            <person name="Davies R."/>
            <person name="Gaudet P."/>
            <person name="Fey P."/>
            <person name="Pilcher K."/>
            <person name="Chen G."/>
            <person name="Saunders D."/>
            <person name="Sodergren E.J."/>
            <person name="Davis P."/>
            <person name="Kerhornou A."/>
            <person name="Nie X."/>
            <person name="Hall N."/>
            <person name="Anjard C."/>
            <person name="Hemphill L."/>
            <person name="Bason N."/>
            <person name="Farbrother P."/>
            <person name="Desany B."/>
            <person name="Just E."/>
            <person name="Morio T."/>
            <person name="Rost R."/>
            <person name="Churcher C.M."/>
            <person name="Cooper J."/>
            <person name="Haydock S."/>
            <person name="van Driessche N."/>
            <person name="Cronin A."/>
            <person name="Goodhead I."/>
            <person name="Muzny D.M."/>
            <person name="Mourier T."/>
            <person name="Pain A."/>
            <person name="Lu M."/>
            <person name="Harper D."/>
            <person name="Lindsay R."/>
            <person name="Hauser H."/>
            <person name="James K.D."/>
            <person name="Quiles M."/>
            <person name="Madan Babu M."/>
            <person name="Saito T."/>
            <person name="Buchrieser C."/>
            <person name="Wardroper A."/>
            <person name="Felder M."/>
            <person name="Thangavelu M."/>
            <person name="Johnson D."/>
            <person name="Knights A."/>
            <person name="Loulseged H."/>
            <person name="Mungall K.L."/>
            <person name="Oliver K."/>
            <person name="Price C."/>
            <person name="Quail M.A."/>
            <person name="Urushihara H."/>
            <person name="Hernandez J."/>
            <person name="Rabbinowitsch E."/>
            <person name="Steffen D."/>
            <person name="Sanders M."/>
            <person name="Ma J."/>
            <person name="Kohara Y."/>
            <person name="Sharp S."/>
            <person name="Simmonds M.N."/>
            <person name="Spiegler S."/>
            <person name="Tivey A."/>
            <person name="Sugano S."/>
            <person name="White B."/>
            <person name="Walker D."/>
            <person name="Woodward J.R."/>
            <person name="Winckler T."/>
            <person name="Tanaka Y."/>
            <person name="Shaulsky G."/>
            <person name="Schleicher M."/>
            <person name="Weinstock G.M."/>
            <person name="Rosenthal A."/>
            <person name="Cox E.C."/>
            <person name="Chisholm R.L."/>
            <person name="Gibbs R.A."/>
            <person name="Loomis W.F."/>
            <person name="Platzer M."/>
            <person name="Kay R.R."/>
            <person name="Williams J.G."/>
            <person name="Dear P.H."/>
            <person name="Noegel A.A."/>
            <person name="Barrell B.G."/>
            <person name="Kuspa A."/>
        </authorList>
    </citation>
    <scope>NUCLEOTIDE SEQUENCE [LARGE SCALE GENOMIC DNA]</scope>
    <source>
        <strain>AX4</strain>
    </source>
</reference>
<gene>
    <name type="primary">commd6</name>
    <name type="ORF">DDB_G0286077</name>
</gene>
<comment type="function">
    <text evidence="1">Scaffold protein in the commander complex that is essential for endosomal recycling of transmembrane cargos; the commander complex is composed of the CCC subcomplex and the retriever subcomplex (By similarity).</text>
</comment>
<comment type="subunit">
    <text evidence="1">Component of the commander complex consisting of the CCC subcomplex and the retriever subcomplex (By similarity). Component of the CCC subcomplex (By similarity).</text>
</comment>
<comment type="similarity">
    <text evidence="3">Belongs to the COMM domain-containing protein 6 family.</text>
</comment>